<geneLocation type="chloroplast"/>
<proteinExistence type="inferred from homology"/>
<gene>
    <name type="primary">ycf53</name>
</gene>
<sequence length="238" mass="28092">MKNQIQVQLSKLKETSNSENAIKKQLEIIETIEYNDYLQLKKLAEIFHYRITKPEYISNCVDGLIYEKLLNSQNSEIIKFTSKLCPKGIVPLKSNKQMDYQDLQILLVQNNLIAADKLTQQKLIKLAGVDEKSRNWLYFTDIKKIPVEDLQTIDQLWNAHSKGKFGFFVQRQIWLALEKNWEQFWYKIGWEINRVPCRYPEEFHWNSTGPKGHLPLCNQLRGVQVLSALFSHKAWDNY</sequence>
<keyword id="KW-0150">Chloroplast</keyword>
<keyword id="KW-0934">Plastid</keyword>
<reference key="1">
    <citation type="journal article" date="1995" name="Plant Mol. Biol. Rep.">
        <title>Complete nucleotide sequence of the Porphyra purpurea chloroplast genome.</title>
        <authorList>
            <person name="Reith M.E."/>
            <person name="Munholland J."/>
        </authorList>
    </citation>
    <scope>NUCLEOTIDE SEQUENCE [LARGE SCALE GENOMIC DNA]</scope>
    <source>
        <strain>Avonport</strain>
    </source>
</reference>
<evidence type="ECO:0000305" key="1"/>
<feature type="chain" id="PRO_0000217383" description="Uncharacterized protein ycf53">
    <location>
        <begin position="1"/>
        <end position="238"/>
    </location>
</feature>
<accession>P51202</accession>
<organism>
    <name type="scientific">Porphyra purpurea</name>
    <name type="common">Red seaweed</name>
    <name type="synonym">Ulva purpurea</name>
    <dbReference type="NCBI Taxonomy" id="2787"/>
    <lineage>
        <taxon>Eukaryota</taxon>
        <taxon>Rhodophyta</taxon>
        <taxon>Bangiophyceae</taxon>
        <taxon>Bangiales</taxon>
        <taxon>Bangiaceae</taxon>
        <taxon>Porphyra</taxon>
    </lineage>
</organism>
<protein>
    <recommendedName>
        <fullName>Uncharacterized protein ycf53</fullName>
    </recommendedName>
    <alternativeName>
        <fullName>ORF238</fullName>
    </alternativeName>
</protein>
<name>YCF53_PORPU</name>
<dbReference type="EMBL" id="U38804">
    <property type="protein sequence ID" value="AAC08088.1"/>
    <property type="molecule type" value="Genomic_DNA"/>
</dbReference>
<dbReference type="PIR" id="S73123">
    <property type="entry name" value="S73123"/>
</dbReference>
<dbReference type="SMR" id="P51202"/>
<dbReference type="GO" id="GO:0009507">
    <property type="term" value="C:chloroplast"/>
    <property type="evidence" value="ECO:0007669"/>
    <property type="project" value="UniProtKB-SubCell"/>
</dbReference>
<dbReference type="GO" id="GO:0046906">
    <property type="term" value="F:tetrapyrrole binding"/>
    <property type="evidence" value="ECO:0007669"/>
    <property type="project" value="TreeGrafter"/>
</dbReference>
<dbReference type="CDD" id="cd16383">
    <property type="entry name" value="GUN4"/>
    <property type="match status" value="1"/>
</dbReference>
<dbReference type="Gene3D" id="1.25.40.620">
    <property type="match status" value="1"/>
</dbReference>
<dbReference type="Gene3D" id="1.10.10.1770">
    <property type="entry name" value="Gun4-like"/>
    <property type="match status" value="1"/>
</dbReference>
<dbReference type="InterPro" id="IPR008629">
    <property type="entry name" value="GUN4-like"/>
</dbReference>
<dbReference type="InterPro" id="IPR037215">
    <property type="entry name" value="GUN4-like_sf"/>
</dbReference>
<dbReference type="PANTHER" id="PTHR34800">
    <property type="entry name" value="TETRAPYRROLE-BINDING PROTEIN, CHLOROPLASTIC"/>
    <property type="match status" value="1"/>
</dbReference>
<dbReference type="PANTHER" id="PTHR34800:SF1">
    <property type="entry name" value="TETRAPYRROLE-BINDING PROTEIN, CHLOROPLASTIC"/>
    <property type="match status" value="1"/>
</dbReference>
<dbReference type="Pfam" id="PF05419">
    <property type="entry name" value="GUN4"/>
    <property type="match status" value="1"/>
</dbReference>
<dbReference type="SUPFAM" id="SSF140869">
    <property type="entry name" value="GUN4-like"/>
    <property type="match status" value="1"/>
</dbReference>
<comment type="subcellular location">
    <subcellularLocation>
        <location>Plastid</location>
        <location>Chloroplast</location>
    </subcellularLocation>
</comment>
<comment type="similarity">
    <text evidence="1">Belongs to the ycf53 family.</text>
</comment>